<feature type="chain" id="PRO_0000148560" description="Argininosuccinate synthase">
    <location>
        <begin position="1"/>
        <end position="407"/>
    </location>
</feature>
<feature type="binding site" evidence="1">
    <location>
        <begin position="13"/>
        <end position="21"/>
    </location>
    <ligand>
        <name>ATP</name>
        <dbReference type="ChEBI" id="CHEBI:30616"/>
    </ligand>
</feature>
<feature type="binding site" evidence="1">
    <location>
        <position position="40"/>
    </location>
    <ligand>
        <name>ATP</name>
        <dbReference type="ChEBI" id="CHEBI:30616"/>
    </ligand>
</feature>
<feature type="binding site" evidence="1">
    <location>
        <position position="91"/>
    </location>
    <ligand>
        <name>L-citrulline</name>
        <dbReference type="ChEBI" id="CHEBI:57743"/>
    </ligand>
</feature>
<feature type="binding site" evidence="1">
    <location>
        <position position="96"/>
    </location>
    <ligand>
        <name>L-citrulline</name>
        <dbReference type="ChEBI" id="CHEBI:57743"/>
    </ligand>
</feature>
<feature type="binding site" evidence="1">
    <location>
        <position position="121"/>
    </location>
    <ligand>
        <name>ATP</name>
        <dbReference type="ChEBI" id="CHEBI:30616"/>
    </ligand>
</feature>
<feature type="binding site" evidence="1">
    <location>
        <position position="123"/>
    </location>
    <ligand>
        <name>L-aspartate</name>
        <dbReference type="ChEBI" id="CHEBI:29991"/>
    </ligand>
</feature>
<feature type="binding site" evidence="1">
    <location>
        <position position="127"/>
    </location>
    <ligand>
        <name>L-aspartate</name>
        <dbReference type="ChEBI" id="CHEBI:29991"/>
    </ligand>
</feature>
<feature type="binding site" evidence="1">
    <location>
        <position position="127"/>
    </location>
    <ligand>
        <name>L-citrulline</name>
        <dbReference type="ChEBI" id="CHEBI:57743"/>
    </ligand>
</feature>
<feature type="binding site" evidence="1">
    <location>
        <position position="128"/>
    </location>
    <ligand>
        <name>L-aspartate</name>
        <dbReference type="ChEBI" id="CHEBI:29991"/>
    </ligand>
</feature>
<feature type="binding site" evidence="1">
    <location>
        <position position="131"/>
    </location>
    <ligand>
        <name>L-citrulline</name>
        <dbReference type="ChEBI" id="CHEBI:57743"/>
    </ligand>
</feature>
<feature type="binding site" evidence="1">
    <location>
        <position position="182"/>
    </location>
    <ligand>
        <name>L-citrulline</name>
        <dbReference type="ChEBI" id="CHEBI:57743"/>
    </ligand>
</feature>
<feature type="binding site" evidence="1">
    <location>
        <position position="191"/>
    </location>
    <ligand>
        <name>L-citrulline</name>
        <dbReference type="ChEBI" id="CHEBI:57743"/>
    </ligand>
</feature>
<feature type="binding site" evidence="1">
    <location>
        <position position="267"/>
    </location>
    <ligand>
        <name>L-citrulline</name>
        <dbReference type="ChEBI" id="CHEBI:57743"/>
    </ligand>
</feature>
<feature type="binding site" evidence="1">
    <location>
        <position position="279"/>
    </location>
    <ligand>
        <name>L-citrulline</name>
        <dbReference type="ChEBI" id="CHEBI:57743"/>
    </ligand>
</feature>
<organism>
    <name type="scientific">Agrobacterium fabrum (strain C58 / ATCC 33970)</name>
    <name type="common">Agrobacterium tumefaciens (strain C58)</name>
    <dbReference type="NCBI Taxonomy" id="176299"/>
    <lineage>
        <taxon>Bacteria</taxon>
        <taxon>Pseudomonadati</taxon>
        <taxon>Pseudomonadota</taxon>
        <taxon>Alphaproteobacteria</taxon>
        <taxon>Hyphomicrobiales</taxon>
        <taxon>Rhizobiaceae</taxon>
        <taxon>Rhizobium/Agrobacterium group</taxon>
        <taxon>Agrobacterium</taxon>
        <taxon>Agrobacterium tumefaciens complex</taxon>
    </lineage>
</organism>
<comment type="catalytic activity">
    <reaction evidence="1">
        <text>L-citrulline + L-aspartate + ATP = 2-(N(omega)-L-arginino)succinate + AMP + diphosphate + H(+)</text>
        <dbReference type="Rhea" id="RHEA:10932"/>
        <dbReference type="ChEBI" id="CHEBI:15378"/>
        <dbReference type="ChEBI" id="CHEBI:29991"/>
        <dbReference type="ChEBI" id="CHEBI:30616"/>
        <dbReference type="ChEBI" id="CHEBI:33019"/>
        <dbReference type="ChEBI" id="CHEBI:57472"/>
        <dbReference type="ChEBI" id="CHEBI:57743"/>
        <dbReference type="ChEBI" id="CHEBI:456215"/>
        <dbReference type="EC" id="6.3.4.5"/>
    </reaction>
</comment>
<comment type="pathway">
    <text evidence="1">Amino-acid biosynthesis; L-arginine biosynthesis; L-arginine from L-ornithine and carbamoyl phosphate: step 2/3.</text>
</comment>
<comment type="subunit">
    <text evidence="1">Homotetramer.</text>
</comment>
<comment type="subcellular location">
    <subcellularLocation>
        <location evidence="1">Cytoplasm</location>
    </subcellularLocation>
</comment>
<comment type="similarity">
    <text evidence="1">Belongs to the argininosuccinate synthase family. Type 1 subfamily.</text>
</comment>
<gene>
    <name evidence="1" type="primary">argG</name>
    <name type="ordered locus">Atu2667</name>
    <name type="ORF">AGR_C_4836</name>
</gene>
<accession>Q8UC31</accession>
<proteinExistence type="inferred from homology"/>
<dbReference type="EC" id="6.3.4.5" evidence="1"/>
<dbReference type="EMBL" id="AE007869">
    <property type="protein sequence ID" value="AAK88389.2"/>
    <property type="molecule type" value="Genomic_DNA"/>
</dbReference>
<dbReference type="PIR" id="AB2904">
    <property type="entry name" value="AB2904"/>
</dbReference>
<dbReference type="PIR" id="D97679">
    <property type="entry name" value="D97679"/>
</dbReference>
<dbReference type="RefSeq" id="NP_355604.2">
    <property type="nucleotide sequence ID" value="NC_003062.2"/>
</dbReference>
<dbReference type="RefSeq" id="WP_010972477.1">
    <property type="nucleotide sequence ID" value="NC_003062.2"/>
</dbReference>
<dbReference type="SMR" id="Q8UC31"/>
<dbReference type="STRING" id="176299.Atu2667"/>
<dbReference type="EnsemblBacteria" id="AAK88389">
    <property type="protein sequence ID" value="AAK88389"/>
    <property type="gene ID" value="Atu2667"/>
</dbReference>
<dbReference type="GeneID" id="1134705"/>
<dbReference type="KEGG" id="atu:Atu2667"/>
<dbReference type="PATRIC" id="fig|176299.10.peg.2675"/>
<dbReference type="eggNOG" id="COG0137">
    <property type="taxonomic scope" value="Bacteria"/>
</dbReference>
<dbReference type="HOGENOM" id="CLU_032784_4_2_5"/>
<dbReference type="OrthoDB" id="9801641at2"/>
<dbReference type="PhylomeDB" id="Q8UC31"/>
<dbReference type="BioCyc" id="AGRO:ATU2667-MONOMER"/>
<dbReference type="UniPathway" id="UPA00068">
    <property type="reaction ID" value="UER00113"/>
</dbReference>
<dbReference type="Proteomes" id="UP000000813">
    <property type="component" value="Chromosome circular"/>
</dbReference>
<dbReference type="GO" id="GO:0005737">
    <property type="term" value="C:cytoplasm"/>
    <property type="evidence" value="ECO:0007669"/>
    <property type="project" value="UniProtKB-SubCell"/>
</dbReference>
<dbReference type="GO" id="GO:0004055">
    <property type="term" value="F:argininosuccinate synthase activity"/>
    <property type="evidence" value="ECO:0007669"/>
    <property type="project" value="UniProtKB-UniRule"/>
</dbReference>
<dbReference type="GO" id="GO:0005524">
    <property type="term" value="F:ATP binding"/>
    <property type="evidence" value="ECO:0007669"/>
    <property type="project" value="UniProtKB-UniRule"/>
</dbReference>
<dbReference type="GO" id="GO:0000053">
    <property type="term" value="P:argininosuccinate metabolic process"/>
    <property type="evidence" value="ECO:0007669"/>
    <property type="project" value="TreeGrafter"/>
</dbReference>
<dbReference type="GO" id="GO:0006526">
    <property type="term" value="P:L-arginine biosynthetic process"/>
    <property type="evidence" value="ECO:0007669"/>
    <property type="project" value="UniProtKB-UniRule"/>
</dbReference>
<dbReference type="GO" id="GO:0000050">
    <property type="term" value="P:urea cycle"/>
    <property type="evidence" value="ECO:0007669"/>
    <property type="project" value="TreeGrafter"/>
</dbReference>
<dbReference type="CDD" id="cd01999">
    <property type="entry name" value="ASS"/>
    <property type="match status" value="1"/>
</dbReference>
<dbReference type="FunFam" id="3.40.50.620:FF:000019">
    <property type="entry name" value="Argininosuccinate synthase"/>
    <property type="match status" value="1"/>
</dbReference>
<dbReference type="FunFam" id="3.90.1260.10:FF:000007">
    <property type="entry name" value="Argininosuccinate synthase"/>
    <property type="match status" value="1"/>
</dbReference>
<dbReference type="Gene3D" id="3.90.1260.10">
    <property type="entry name" value="Argininosuccinate synthetase, chain A, domain 2"/>
    <property type="match status" value="1"/>
</dbReference>
<dbReference type="Gene3D" id="3.40.50.620">
    <property type="entry name" value="HUPs"/>
    <property type="match status" value="1"/>
</dbReference>
<dbReference type="Gene3D" id="1.20.5.470">
    <property type="entry name" value="Single helix bin"/>
    <property type="match status" value="1"/>
</dbReference>
<dbReference type="HAMAP" id="MF_00005">
    <property type="entry name" value="Arg_succ_synth_type1"/>
    <property type="match status" value="1"/>
</dbReference>
<dbReference type="InterPro" id="IPR048268">
    <property type="entry name" value="Arginosuc_syn_C"/>
</dbReference>
<dbReference type="InterPro" id="IPR048267">
    <property type="entry name" value="Arginosuc_syn_N"/>
</dbReference>
<dbReference type="InterPro" id="IPR001518">
    <property type="entry name" value="Arginosuc_synth"/>
</dbReference>
<dbReference type="InterPro" id="IPR018223">
    <property type="entry name" value="Arginosuc_synth_CS"/>
</dbReference>
<dbReference type="InterPro" id="IPR023434">
    <property type="entry name" value="Arginosuc_synth_type_1_subfam"/>
</dbReference>
<dbReference type="InterPro" id="IPR024074">
    <property type="entry name" value="AS_cat/multimer_dom_body"/>
</dbReference>
<dbReference type="InterPro" id="IPR014729">
    <property type="entry name" value="Rossmann-like_a/b/a_fold"/>
</dbReference>
<dbReference type="NCBIfam" id="TIGR00032">
    <property type="entry name" value="argG"/>
    <property type="match status" value="1"/>
</dbReference>
<dbReference type="NCBIfam" id="NF001770">
    <property type="entry name" value="PRK00509.1"/>
    <property type="match status" value="1"/>
</dbReference>
<dbReference type="PANTHER" id="PTHR11587">
    <property type="entry name" value="ARGININOSUCCINATE SYNTHASE"/>
    <property type="match status" value="1"/>
</dbReference>
<dbReference type="PANTHER" id="PTHR11587:SF2">
    <property type="entry name" value="ARGININOSUCCINATE SYNTHASE"/>
    <property type="match status" value="1"/>
</dbReference>
<dbReference type="Pfam" id="PF20979">
    <property type="entry name" value="Arginosuc_syn_C"/>
    <property type="match status" value="1"/>
</dbReference>
<dbReference type="Pfam" id="PF00764">
    <property type="entry name" value="Arginosuc_synth"/>
    <property type="match status" value="1"/>
</dbReference>
<dbReference type="SUPFAM" id="SSF52402">
    <property type="entry name" value="Adenine nucleotide alpha hydrolases-like"/>
    <property type="match status" value="1"/>
</dbReference>
<dbReference type="SUPFAM" id="SSF69864">
    <property type="entry name" value="Argininosuccinate synthetase, C-terminal domain"/>
    <property type="match status" value="1"/>
</dbReference>
<dbReference type="PROSITE" id="PS00564">
    <property type="entry name" value="ARGININOSUCCIN_SYN_1"/>
    <property type="match status" value="1"/>
</dbReference>
<dbReference type="PROSITE" id="PS00565">
    <property type="entry name" value="ARGININOSUCCIN_SYN_2"/>
    <property type="match status" value="1"/>
</dbReference>
<reference key="1">
    <citation type="journal article" date="2001" name="Science">
        <title>The genome of the natural genetic engineer Agrobacterium tumefaciens C58.</title>
        <authorList>
            <person name="Wood D.W."/>
            <person name="Setubal J.C."/>
            <person name="Kaul R."/>
            <person name="Monks D.E."/>
            <person name="Kitajima J.P."/>
            <person name="Okura V.K."/>
            <person name="Zhou Y."/>
            <person name="Chen L."/>
            <person name="Wood G.E."/>
            <person name="Almeida N.F. Jr."/>
            <person name="Woo L."/>
            <person name="Chen Y."/>
            <person name="Paulsen I.T."/>
            <person name="Eisen J.A."/>
            <person name="Karp P.D."/>
            <person name="Bovee D. Sr."/>
            <person name="Chapman P."/>
            <person name="Clendenning J."/>
            <person name="Deatherage G."/>
            <person name="Gillet W."/>
            <person name="Grant C."/>
            <person name="Kutyavin T."/>
            <person name="Levy R."/>
            <person name="Li M.-J."/>
            <person name="McClelland E."/>
            <person name="Palmieri A."/>
            <person name="Raymond C."/>
            <person name="Rouse G."/>
            <person name="Saenphimmachak C."/>
            <person name="Wu Z."/>
            <person name="Romero P."/>
            <person name="Gordon D."/>
            <person name="Zhang S."/>
            <person name="Yoo H."/>
            <person name="Tao Y."/>
            <person name="Biddle P."/>
            <person name="Jung M."/>
            <person name="Krespan W."/>
            <person name="Perry M."/>
            <person name="Gordon-Kamm B."/>
            <person name="Liao L."/>
            <person name="Kim S."/>
            <person name="Hendrick C."/>
            <person name="Zhao Z.-Y."/>
            <person name="Dolan M."/>
            <person name="Chumley F."/>
            <person name="Tingey S.V."/>
            <person name="Tomb J.-F."/>
            <person name="Gordon M.P."/>
            <person name="Olson M.V."/>
            <person name="Nester E.W."/>
        </authorList>
    </citation>
    <scope>NUCLEOTIDE SEQUENCE [LARGE SCALE GENOMIC DNA]</scope>
    <source>
        <strain>C58 / ATCC 33970</strain>
    </source>
</reference>
<reference key="2">
    <citation type="journal article" date="2001" name="Science">
        <title>Genome sequence of the plant pathogen and biotechnology agent Agrobacterium tumefaciens C58.</title>
        <authorList>
            <person name="Goodner B."/>
            <person name="Hinkle G."/>
            <person name="Gattung S."/>
            <person name="Miller N."/>
            <person name="Blanchard M."/>
            <person name="Qurollo B."/>
            <person name="Goldman B.S."/>
            <person name="Cao Y."/>
            <person name="Askenazi M."/>
            <person name="Halling C."/>
            <person name="Mullin L."/>
            <person name="Houmiel K."/>
            <person name="Gordon J."/>
            <person name="Vaudin M."/>
            <person name="Iartchouk O."/>
            <person name="Epp A."/>
            <person name="Liu F."/>
            <person name="Wollam C."/>
            <person name="Allinger M."/>
            <person name="Doughty D."/>
            <person name="Scott C."/>
            <person name="Lappas C."/>
            <person name="Markelz B."/>
            <person name="Flanagan C."/>
            <person name="Crowell C."/>
            <person name="Gurson J."/>
            <person name="Lomo C."/>
            <person name="Sear C."/>
            <person name="Strub G."/>
            <person name="Cielo C."/>
            <person name="Slater S."/>
        </authorList>
    </citation>
    <scope>NUCLEOTIDE SEQUENCE [LARGE SCALE GENOMIC DNA]</scope>
    <source>
        <strain>C58 / ATCC 33970</strain>
    </source>
</reference>
<sequence>MALPKDVKKVVLAYSGGLDTSIILKWLQTELGAEVVTFTADLGQGEELEPARKKAEMLGIKEIFVEDVREEFVRDFVFPMFRANAVYEGVYLLGTSIARPLISKHLIEIAKKTGADAIAHGATGKGNDQVRFELSAYALNPDIKIIAPWRDWTFKSRTDLLNFAEQHQIPVAKDKKGEAPFSVDANLLHSSSEGKVLEDPAVEAPEYVHMRTISPEAAPDKATVIKVGFRKGDACSINGVEMSPATLLATLNNYGRENGIGRLDLVENRFVGMKSRGVYETPGGTILLAAHRAIESITLDRGAAHLKDDLMPRYAELIYYGFWFSPEREMLQALIDKSQEHVEGEVTLKLYKGNVMVTGRESEKSLYSDALVTFEDDHGAYDQKDAAGFIKLNALRLRTLAKRNLNK</sequence>
<protein>
    <recommendedName>
        <fullName evidence="1">Argininosuccinate synthase</fullName>
        <ecNumber evidence="1">6.3.4.5</ecNumber>
    </recommendedName>
    <alternativeName>
        <fullName evidence="1">Citrulline--aspartate ligase</fullName>
    </alternativeName>
</protein>
<evidence type="ECO:0000255" key="1">
    <source>
        <dbReference type="HAMAP-Rule" id="MF_00005"/>
    </source>
</evidence>
<name>ASSY_AGRFC</name>
<keyword id="KW-0028">Amino-acid biosynthesis</keyword>
<keyword id="KW-0055">Arginine biosynthesis</keyword>
<keyword id="KW-0067">ATP-binding</keyword>
<keyword id="KW-0963">Cytoplasm</keyword>
<keyword id="KW-0436">Ligase</keyword>
<keyword id="KW-0547">Nucleotide-binding</keyword>
<keyword id="KW-1185">Reference proteome</keyword>